<name>ISPT_STAAW</name>
<reference key="1">
    <citation type="journal article" date="2002" name="Lancet">
        <title>Genome and virulence determinants of high virulence community-acquired MRSA.</title>
        <authorList>
            <person name="Baba T."/>
            <person name="Takeuchi F."/>
            <person name="Kuroda M."/>
            <person name="Yuzawa H."/>
            <person name="Aoki K."/>
            <person name="Oguchi A."/>
            <person name="Nagai Y."/>
            <person name="Iwama N."/>
            <person name="Asano K."/>
            <person name="Naimi T."/>
            <person name="Kuroda H."/>
            <person name="Cui L."/>
            <person name="Yamamoto K."/>
            <person name="Hiramatsu K."/>
        </authorList>
    </citation>
    <scope>NUCLEOTIDE SEQUENCE [LARGE SCALE GENOMIC DNA]</scope>
    <source>
        <strain>MW2</strain>
    </source>
</reference>
<dbReference type="EC" id="2.5.1.-" evidence="1"/>
<dbReference type="EMBL" id="BA000033">
    <property type="protein sequence ID" value="BAB95008.1"/>
    <property type="molecule type" value="Genomic_DNA"/>
</dbReference>
<dbReference type="RefSeq" id="WP_000473705.1">
    <property type="nucleotide sequence ID" value="NC_003923.1"/>
</dbReference>
<dbReference type="SMR" id="Q8NWZ5"/>
<dbReference type="KEGG" id="sam:MW1143"/>
<dbReference type="HOGENOM" id="CLU_038505_1_1_9"/>
<dbReference type="GO" id="GO:0005829">
    <property type="term" value="C:cytosol"/>
    <property type="evidence" value="ECO:0007669"/>
    <property type="project" value="TreeGrafter"/>
</dbReference>
<dbReference type="GO" id="GO:0008834">
    <property type="term" value="F:ditrans,polycis-undecaprenyl-diphosphate synthase [(2E,6E)-farnesyl-diphosphate specific] activity"/>
    <property type="evidence" value="ECO:0007669"/>
    <property type="project" value="TreeGrafter"/>
</dbReference>
<dbReference type="GO" id="GO:0000287">
    <property type="term" value="F:magnesium ion binding"/>
    <property type="evidence" value="ECO:0007669"/>
    <property type="project" value="UniProtKB-UniRule"/>
</dbReference>
<dbReference type="GO" id="GO:0030145">
    <property type="term" value="F:manganese ion binding"/>
    <property type="evidence" value="ECO:0007669"/>
    <property type="project" value="TreeGrafter"/>
</dbReference>
<dbReference type="GO" id="GO:0016094">
    <property type="term" value="P:polyprenol biosynthetic process"/>
    <property type="evidence" value="ECO:0007669"/>
    <property type="project" value="TreeGrafter"/>
</dbReference>
<dbReference type="CDD" id="cd00475">
    <property type="entry name" value="Cis_IPPS"/>
    <property type="match status" value="1"/>
</dbReference>
<dbReference type="FunFam" id="3.40.1180.10:FF:000001">
    <property type="entry name" value="(2E,6E)-farnesyl-diphosphate-specific ditrans,polycis-undecaprenyl-diphosphate synthase"/>
    <property type="match status" value="1"/>
</dbReference>
<dbReference type="Gene3D" id="3.40.1180.10">
    <property type="entry name" value="Decaprenyl diphosphate synthase-like"/>
    <property type="match status" value="1"/>
</dbReference>
<dbReference type="HAMAP" id="MF_01139">
    <property type="entry name" value="ISPT"/>
    <property type="match status" value="1"/>
</dbReference>
<dbReference type="InterPro" id="IPR001441">
    <property type="entry name" value="UPP_synth-like"/>
</dbReference>
<dbReference type="InterPro" id="IPR018520">
    <property type="entry name" value="UPP_synth-like_CS"/>
</dbReference>
<dbReference type="InterPro" id="IPR036424">
    <property type="entry name" value="UPP_synth-like_sf"/>
</dbReference>
<dbReference type="NCBIfam" id="NF011405">
    <property type="entry name" value="PRK14830.1"/>
    <property type="match status" value="1"/>
</dbReference>
<dbReference type="NCBIfam" id="TIGR00055">
    <property type="entry name" value="uppS"/>
    <property type="match status" value="1"/>
</dbReference>
<dbReference type="PANTHER" id="PTHR10291:SF0">
    <property type="entry name" value="DEHYDRODOLICHYL DIPHOSPHATE SYNTHASE 2"/>
    <property type="match status" value="1"/>
</dbReference>
<dbReference type="PANTHER" id="PTHR10291">
    <property type="entry name" value="DEHYDRODOLICHYL DIPHOSPHATE SYNTHASE FAMILY MEMBER"/>
    <property type="match status" value="1"/>
</dbReference>
<dbReference type="Pfam" id="PF01255">
    <property type="entry name" value="Prenyltransf"/>
    <property type="match status" value="1"/>
</dbReference>
<dbReference type="SUPFAM" id="SSF64005">
    <property type="entry name" value="Undecaprenyl diphosphate synthase"/>
    <property type="match status" value="1"/>
</dbReference>
<dbReference type="PROSITE" id="PS01066">
    <property type="entry name" value="UPP_SYNTHASE"/>
    <property type="match status" value="1"/>
</dbReference>
<protein>
    <recommendedName>
        <fullName evidence="1">Isoprenyl transferase</fullName>
        <ecNumber evidence="1">2.5.1.-</ecNumber>
    </recommendedName>
</protein>
<feature type="chain" id="PRO_0000123676" description="Isoprenyl transferase">
    <location>
        <begin position="1"/>
        <end position="256"/>
    </location>
</feature>
<feature type="active site" evidence="1">
    <location>
        <position position="33"/>
    </location>
</feature>
<feature type="active site" description="Proton acceptor" evidence="1">
    <location>
        <position position="81"/>
    </location>
</feature>
<feature type="binding site" evidence="1">
    <location>
        <position position="33"/>
    </location>
    <ligand>
        <name>Mg(2+)</name>
        <dbReference type="ChEBI" id="CHEBI:18420"/>
    </ligand>
</feature>
<feature type="binding site" evidence="1">
    <location>
        <begin position="34"/>
        <end position="37"/>
    </location>
    <ligand>
        <name>substrate</name>
    </ligand>
</feature>
<feature type="binding site" evidence="1">
    <location>
        <position position="38"/>
    </location>
    <ligand>
        <name>substrate</name>
    </ligand>
</feature>
<feature type="binding site" evidence="1">
    <location>
        <position position="46"/>
    </location>
    <ligand>
        <name>substrate</name>
    </ligand>
</feature>
<feature type="binding site" evidence="1">
    <location>
        <position position="50"/>
    </location>
    <ligand>
        <name>substrate</name>
    </ligand>
</feature>
<feature type="binding site" evidence="1">
    <location>
        <begin position="78"/>
        <end position="80"/>
    </location>
    <ligand>
        <name>substrate</name>
    </ligand>
</feature>
<feature type="binding site" evidence="1">
    <location>
        <position position="82"/>
    </location>
    <ligand>
        <name>substrate</name>
    </ligand>
</feature>
<feature type="binding site" evidence="1">
    <location>
        <position position="84"/>
    </location>
    <ligand>
        <name>substrate</name>
    </ligand>
</feature>
<feature type="binding site" evidence="1">
    <location>
        <position position="201"/>
    </location>
    <ligand>
        <name>substrate</name>
    </ligand>
</feature>
<feature type="binding site" evidence="1">
    <location>
        <begin position="207"/>
        <end position="209"/>
    </location>
    <ligand>
        <name>substrate</name>
    </ligand>
</feature>
<feature type="binding site" evidence="1">
    <location>
        <position position="220"/>
    </location>
    <ligand>
        <name>Mg(2+)</name>
        <dbReference type="ChEBI" id="CHEBI:18420"/>
    </ligand>
</feature>
<evidence type="ECO:0000255" key="1">
    <source>
        <dbReference type="HAMAP-Rule" id="MF_01139"/>
    </source>
</evidence>
<sequence>MFKKLINKKNTINNYNEELDSSNIPEHIAIIMDGNGRWAKKRKMPRIKGHYEGMQTIKKITRVASDIGVKYLTLYAFSTENWSRPESEVNYIMNLPVNFLKTFLPELIEKNVKVETIGFTDKLPKSTIEAINNAKEKTANNTGLKLIFAINYGGRAELVHSIKNMFDELHQQGLNSDIIDETYINNHLMTKDYPDPELLIRTSGEQRISNFLIWQVSYSEFIFNQKLWPDFDEDELIKCIKIYQSRQRRFGGLSEE</sequence>
<organism>
    <name type="scientific">Staphylococcus aureus (strain MW2)</name>
    <dbReference type="NCBI Taxonomy" id="196620"/>
    <lineage>
        <taxon>Bacteria</taxon>
        <taxon>Bacillati</taxon>
        <taxon>Bacillota</taxon>
        <taxon>Bacilli</taxon>
        <taxon>Bacillales</taxon>
        <taxon>Staphylococcaceae</taxon>
        <taxon>Staphylococcus</taxon>
    </lineage>
</organism>
<accession>Q8NWZ5</accession>
<comment type="function">
    <text evidence="1">Catalyzes the condensation of isopentenyl diphosphate (IPP) with allylic pyrophosphates generating different type of terpenoids.</text>
</comment>
<comment type="cofactor">
    <cofactor evidence="1">
        <name>Mg(2+)</name>
        <dbReference type="ChEBI" id="CHEBI:18420"/>
    </cofactor>
    <text evidence="1">Binds 2 magnesium ions per subunit.</text>
</comment>
<comment type="subunit">
    <text evidence="1">Homodimer.</text>
</comment>
<comment type="similarity">
    <text evidence="1">Belongs to the UPP synthase family.</text>
</comment>
<gene>
    <name evidence="1" type="primary">uppS</name>
    <name type="ordered locus">MW1143</name>
</gene>
<keyword id="KW-0460">Magnesium</keyword>
<keyword id="KW-0479">Metal-binding</keyword>
<keyword id="KW-0808">Transferase</keyword>
<proteinExistence type="inferred from homology"/>